<sequence length="138" mass="15742">MRTLWIMAVLLVGVEGSLLEFGRMIKEETGKNPLFSYISYGCYCGWGGQGQPKDATDRCCFVHDCCYGKLWSCSPKTDIYFYYRKNGAIVCARGTWCEKQICECDKAAAICFRENLGTYKDEYQSYGKSRCTEKSLKC</sequence>
<evidence type="ECO:0000250" key="1"/>
<evidence type="ECO:0000255" key="2">
    <source>
        <dbReference type="PROSITE-ProRule" id="PRU10035"/>
    </source>
</evidence>
<evidence type="ECO:0000255" key="3">
    <source>
        <dbReference type="PROSITE-ProRule" id="PRU10036"/>
    </source>
</evidence>
<evidence type="ECO:0000269" key="4">
    <source>
    </source>
</evidence>
<evidence type="ECO:0000305" key="5"/>
<organism>
    <name type="scientific">Craspedocephalus borneensis</name>
    <name type="common">Borneo pit viper</name>
    <name type="synonym">Trimeresurus borneensis</name>
    <dbReference type="NCBI Taxonomy" id="3147914"/>
    <lineage>
        <taxon>Eukaryota</taxon>
        <taxon>Metazoa</taxon>
        <taxon>Chordata</taxon>
        <taxon>Craniata</taxon>
        <taxon>Vertebrata</taxon>
        <taxon>Euteleostomi</taxon>
        <taxon>Lepidosauria</taxon>
        <taxon>Squamata</taxon>
        <taxon>Bifurcata</taxon>
        <taxon>Unidentata</taxon>
        <taxon>Episquamata</taxon>
        <taxon>Toxicofera</taxon>
        <taxon>Serpentes</taxon>
        <taxon>Colubroidea</taxon>
        <taxon>Viperidae</taxon>
        <taxon>Crotalinae</taxon>
        <taxon>Craspedocephalus</taxon>
    </lineage>
</organism>
<proteinExistence type="evidence at protein level"/>
<protein>
    <recommendedName>
        <fullName>Basic phospholipase A2 Tbo-G6D49</fullName>
        <shortName>svPLA2</shortName>
        <ecNumber>3.1.1.4</ecNumber>
    </recommendedName>
    <alternativeName>
        <fullName>Phosphatidylcholine 2-acylhydrolase</fullName>
    </alternativeName>
</protein>
<reference key="1">
    <citation type="journal article" date="2005" name="FEBS J.">
        <title>Unusual venom phospholipases A2 of two primitive tree vipers Trimeresurus puniceus and Trimeresurus borneensis.</title>
        <authorList>
            <person name="Wang Y.-M."/>
            <person name="Peng H.-F."/>
            <person name="Tsai I.-H."/>
        </authorList>
    </citation>
    <scope>NUCLEOTIDE SEQUENCE [MRNA]</scope>
    <scope>PROTEIN SEQUENCE OF 17-39</scope>
    <scope>FUNCTION</scope>
    <scope>SUBUNIT</scope>
    <scope>MASS SPECTROMETRY</scope>
    <source>
        <tissue>Venom</tissue>
        <tissue>Venom gland</tissue>
    </source>
</reference>
<dbReference type="EC" id="3.1.1.4"/>
<dbReference type="EMBL" id="AY355179">
    <property type="protein sequence ID" value="AAR14173.1"/>
    <property type="molecule type" value="mRNA"/>
</dbReference>
<dbReference type="SMR" id="Q2YHJ2"/>
<dbReference type="GO" id="GO:0005576">
    <property type="term" value="C:extracellular region"/>
    <property type="evidence" value="ECO:0007669"/>
    <property type="project" value="UniProtKB-SubCell"/>
</dbReference>
<dbReference type="GO" id="GO:0005509">
    <property type="term" value="F:calcium ion binding"/>
    <property type="evidence" value="ECO:0007669"/>
    <property type="project" value="InterPro"/>
</dbReference>
<dbReference type="GO" id="GO:0047498">
    <property type="term" value="F:calcium-dependent phospholipase A2 activity"/>
    <property type="evidence" value="ECO:0007669"/>
    <property type="project" value="TreeGrafter"/>
</dbReference>
<dbReference type="GO" id="GO:0005543">
    <property type="term" value="F:phospholipid binding"/>
    <property type="evidence" value="ECO:0007669"/>
    <property type="project" value="TreeGrafter"/>
</dbReference>
<dbReference type="GO" id="GO:0090729">
    <property type="term" value="F:toxin activity"/>
    <property type="evidence" value="ECO:0007669"/>
    <property type="project" value="UniProtKB-KW"/>
</dbReference>
<dbReference type="GO" id="GO:0050482">
    <property type="term" value="P:arachidonate secretion"/>
    <property type="evidence" value="ECO:0007669"/>
    <property type="project" value="InterPro"/>
</dbReference>
<dbReference type="GO" id="GO:0016042">
    <property type="term" value="P:lipid catabolic process"/>
    <property type="evidence" value="ECO:0007669"/>
    <property type="project" value="UniProtKB-KW"/>
</dbReference>
<dbReference type="GO" id="GO:0042130">
    <property type="term" value="P:negative regulation of T cell proliferation"/>
    <property type="evidence" value="ECO:0007669"/>
    <property type="project" value="TreeGrafter"/>
</dbReference>
<dbReference type="GO" id="GO:0006644">
    <property type="term" value="P:phospholipid metabolic process"/>
    <property type="evidence" value="ECO:0007669"/>
    <property type="project" value="InterPro"/>
</dbReference>
<dbReference type="CDD" id="cd00125">
    <property type="entry name" value="PLA2c"/>
    <property type="match status" value="1"/>
</dbReference>
<dbReference type="FunFam" id="1.20.90.10:FF:000001">
    <property type="entry name" value="Basic phospholipase A2 homolog"/>
    <property type="match status" value="1"/>
</dbReference>
<dbReference type="Gene3D" id="1.20.90.10">
    <property type="entry name" value="Phospholipase A2 domain"/>
    <property type="match status" value="1"/>
</dbReference>
<dbReference type="InterPro" id="IPR001211">
    <property type="entry name" value="PLipase_A2"/>
</dbReference>
<dbReference type="InterPro" id="IPR033112">
    <property type="entry name" value="PLipase_A2_Asp_AS"/>
</dbReference>
<dbReference type="InterPro" id="IPR016090">
    <property type="entry name" value="PLipase_A2_dom"/>
</dbReference>
<dbReference type="InterPro" id="IPR036444">
    <property type="entry name" value="PLipase_A2_dom_sf"/>
</dbReference>
<dbReference type="InterPro" id="IPR033113">
    <property type="entry name" value="PLipase_A2_His_AS"/>
</dbReference>
<dbReference type="PANTHER" id="PTHR11716">
    <property type="entry name" value="PHOSPHOLIPASE A2 FAMILY MEMBER"/>
    <property type="match status" value="1"/>
</dbReference>
<dbReference type="PANTHER" id="PTHR11716:SF9">
    <property type="entry name" value="PHOSPHOLIPASE A2, MEMBRANE ASSOCIATED"/>
    <property type="match status" value="1"/>
</dbReference>
<dbReference type="Pfam" id="PF00068">
    <property type="entry name" value="Phospholip_A2_1"/>
    <property type="match status" value="1"/>
</dbReference>
<dbReference type="PRINTS" id="PR00389">
    <property type="entry name" value="PHPHLIPASEA2"/>
</dbReference>
<dbReference type="SMART" id="SM00085">
    <property type="entry name" value="PA2c"/>
    <property type="match status" value="1"/>
</dbReference>
<dbReference type="SUPFAM" id="SSF48619">
    <property type="entry name" value="Phospholipase A2, PLA2"/>
    <property type="match status" value="1"/>
</dbReference>
<dbReference type="PROSITE" id="PS00119">
    <property type="entry name" value="PA2_ASP"/>
    <property type="match status" value="1"/>
</dbReference>
<dbReference type="PROSITE" id="PS00118">
    <property type="entry name" value="PA2_HIS"/>
    <property type="match status" value="1"/>
</dbReference>
<accession>Q2YHJ2</accession>
<name>PA2B_CRABR</name>
<keyword id="KW-1203">Blood coagulation cascade inhibiting toxin</keyword>
<keyword id="KW-0106">Calcium</keyword>
<keyword id="KW-0903">Direct protein sequencing</keyword>
<keyword id="KW-1015">Disulfide bond</keyword>
<keyword id="KW-1199">Hemostasis impairing toxin</keyword>
<keyword id="KW-0378">Hydrolase</keyword>
<keyword id="KW-0442">Lipid degradation</keyword>
<keyword id="KW-0443">Lipid metabolism</keyword>
<keyword id="KW-0479">Metal-binding</keyword>
<keyword id="KW-1201">Platelet aggregation inhibiting toxin</keyword>
<keyword id="KW-0964">Secreted</keyword>
<keyword id="KW-0732">Signal</keyword>
<keyword id="KW-0800">Toxin</keyword>
<comment type="function">
    <text evidence="4">Snake venom phospholipase A2 (PLA2) that impairs hemostasis. It weakly inhibits ADP-induced platelet aggregation when tested on platelet rich plasma from human and rabbit blood (15-25% of inhibition at 5-10 ug of enzyme), and dose-dependently inhibits blood coagulation, possibly by inhibiting thrombin activation. Exhibits strong hydrolytic activities toward L-dipalmitoyl phosphatidylcholine. PLA2 catalyzes the calcium-dependent hydrolysis of the 2-acyl groups in 3-sn-phosphoglycerides.</text>
</comment>
<comment type="catalytic activity">
    <reaction evidence="2 3">
        <text>a 1,2-diacyl-sn-glycero-3-phosphocholine + H2O = a 1-acyl-sn-glycero-3-phosphocholine + a fatty acid + H(+)</text>
        <dbReference type="Rhea" id="RHEA:15801"/>
        <dbReference type="ChEBI" id="CHEBI:15377"/>
        <dbReference type="ChEBI" id="CHEBI:15378"/>
        <dbReference type="ChEBI" id="CHEBI:28868"/>
        <dbReference type="ChEBI" id="CHEBI:57643"/>
        <dbReference type="ChEBI" id="CHEBI:58168"/>
        <dbReference type="EC" id="3.1.1.4"/>
    </reaction>
</comment>
<comment type="cofactor">
    <cofactor evidence="1">
        <name>Ca(2+)</name>
        <dbReference type="ChEBI" id="CHEBI:29108"/>
    </cofactor>
    <text evidence="1">Binds 1 Ca(2+) ion.</text>
</comment>
<comment type="subunit">
    <text evidence="4">Monomer.</text>
</comment>
<comment type="subcellular location">
    <subcellularLocation>
        <location>Secreted</location>
    </subcellularLocation>
</comment>
<comment type="tissue specificity">
    <text>Expressed by the venom gland.</text>
</comment>
<comment type="mass spectrometry" mass="13959.6" method="Electrospray" evidence="4"/>
<comment type="similarity">
    <text evidence="5">Belongs to the phospholipase A2 family. Group II subfamily. D49 sub-subfamily.</text>
</comment>
<feature type="signal peptide" evidence="4">
    <location>
        <begin position="1"/>
        <end position="16"/>
    </location>
</feature>
<feature type="chain" id="PRO_0000419055" description="Basic phospholipase A2 Tbo-G6D49">
    <location>
        <begin position="17"/>
        <end position="138"/>
    </location>
</feature>
<feature type="active site" evidence="1">
    <location>
        <position position="63"/>
    </location>
</feature>
<feature type="active site" evidence="1">
    <location>
        <position position="105"/>
    </location>
</feature>
<feature type="binding site" evidence="1">
    <location>
        <position position="43"/>
    </location>
    <ligand>
        <name>Ca(2+)</name>
        <dbReference type="ChEBI" id="CHEBI:29108"/>
    </ligand>
</feature>
<feature type="binding site" evidence="1">
    <location>
        <position position="45"/>
    </location>
    <ligand>
        <name>Ca(2+)</name>
        <dbReference type="ChEBI" id="CHEBI:29108"/>
    </ligand>
</feature>
<feature type="binding site" evidence="1">
    <location>
        <position position="47"/>
    </location>
    <ligand>
        <name>Ca(2+)</name>
        <dbReference type="ChEBI" id="CHEBI:29108"/>
    </ligand>
</feature>
<feature type="binding site" evidence="1">
    <location>
        <position position="64"/>
    </location>
    <ligand>
        <name>Ca(2+)</name>
        <dbReference type="ChEBI" id="CHEBI:29108"/>
    </ligand>
</feature>
<feature type="disulfide bond" evidence="1">
    <location>
        <begin position="42"/>
        <end position="131"/>
    </location>
</feature>
<feature type="disulfide bond" evidence="1">
    <location>
        <begin position="44"/>
        <end position="60"/>
    </location>
</feature>
<feature type="disulfide bond" evidence="1">
    <location>
        <begin position="59"/>
        <end position="111"/>
    </location>
</feature>
<feature type="disulfide bond" evidence="1">
    <location>
        <begin position="65"/>
        <end position="138"/>
    </location>
</feature>
<feature type="disulfide bond" evidence="1">
    <location>
        <begin position="66"/>
        <end position="104"/>
    </location>
</feature>
<feature type="disulfide bond" evidence="1">
    <location>
        <begin position="73"/>
        <end position="97"/>
    </location>
</feature>
<feature type="disulfide bond" evidence="1">
    <location>
        <begin position="91"/>
        <end position="102"/>
    </location>
</feature>